<accession>B6EHV6</accession>
<proteinExistence type="inferred from homology"/>
<reference key="1">
    <citation type="journal article" date="2008" name="BMC Genomics">
        <title>The genome sequence of the fish pathogen Aliivibrio salmonicida strain LFI1238 shows extensive evidence of gene decay.</title>
        <authorList>
            <person name="Hjerde E."/>
            <person name="Lorentzen M.S."/>
            <person name="Holden M.T."/>
            <person name="Seeger K."/>
            <person name="Paulsen S."/>
            <person name="Bason N."/>
            <person name="Churcher C."/>
            <person name="Harris D."/>
            <person name="Norbertczak H."/>
            <person name="Quail M.A."/>
            <person name="Sanders S."/>
            <person name="Thurston S."/>
            <person name="Parkhill J."/>
            <person name="Willassen N.P."/>
            <person name="Thomson N.R."/>
        </authorList>
    </citation>
    <scope>NUCLEOTIDE SEQUENCE [LARGE SCALE GENOMIC DNA]</scope>
    <source>
        <strain>LFI1238</strain>
    </source>
</reference>
<gene>
    <name evidence="1" type="primary">sucC</name>
    <name type="ordered locus">VSAL_I0848</name>
</gene>
<organism>
    <name type="scientific">Aliivibrio salmonicida (strain LFI1238)</name>
    <name type="common">Vibrio salmonicida (strain LFI1238)</name>
    <dbReference type="NCBI Taxonomy" id="316275"/>
    <lineage>
        <taxon>Bacteria</taxon>
        <taxon>Pseudomonadati</taxon>
        <taxon>Pseudomonadota</taxon>
        <taxon>Gammaproteobacteria</taxon>
        <taxon>Vibrionales</taxon>
        <taxon>Vibrionaceae</taxon>
        <taxon>Aliivibrio</taxon>
    </lineage>
</organism>
<keyword id="KW-0067">ATP-binding</keyword>
<keyword id="KW-0436">Ligase</keyword>
<keyword id="KW-0460">Magnesium</keyword>
<keyword id="KW-0479">Metal-binding</keyword>
<keyword id="KW-0547">Nucleotide-binding</keyword>
<keyword id="KW-0816">Tricarboxylic acid cycle</keyword>
<sequence length="388" mass="41421">MNLHEYQAKQLFAEYGLPVPEGYACDTAQEAFEAAGRISTAKKVVKCQVHAGGRGKAGGVELHDTKEGVKEFAQKWLGKNLVTFQTDAKGQPVTKVLVEEASNIANELYLGAVVDRATRRIVFMASTEGGVDIEKIAEETPELIHQAAIDPLVGPQAFQGRELAFKLGLEGDQIKQFVKIFLGLGNMFAQYDLALLEINPLVVTAEGNLLCLDGKINIDSNAMYRQPKLREMHDPSQEDEREAHAAQWELNYVALDGSIGCMVNGAGLAMGTMDIVNLHGGQPANFLDVGGGATKERVTEAFKIILSDSNVKAVLVNIFGGIVRCDLIADGIIGAVEEVGVKVPVVVRLEGNNAPLGSQKLAESGLNIIAATSLTEAAEKVVAAAEGK</sequence>
<dbReference type="EC" id="6.2.1.5" evidence="1"/>
<dbReference type="EMBL" id="FM178379">
    <property type="protein sequence ID" value="CAQ78533.1"/>
    <property type="molecule type" value="Genomic_DNA"/>
</dbReference>
<dbReference type="RefSeq" id="WP_012549635.1">
    <property type="nucleotide sequence ID" value="NC_011312.1"/>
</dbReference>
<dbReference type="SMR" id="B6EHV6"/>
<dbReference type="KEGG" id="vsa:VSAL_I0848"/>
<dbReference type="eggNOG" id="COG0045">
    <property type="taxonomic scope" value="Bacteria"/>
</dbReference>
<dbReference type="HOGENOM" id="CLU_037430_0_2_6"/>
<dbReference type="UniPathway" id="UPA00223">
    <property type="reaction ID" value="UER00999"/>
</dbReference>
<dbReference type="Proteomes" id="UP000001730">
    <property type="component" value="Chromosome 1"/>
</dbReference>
<dbReference type="GO" id="GO:0005829">
    <property type="term" value="C:cytosol"/>
    <property type="evidence" value="ECO:0007669"/>
    <property type="project" value="TreeGrafter"/>
</dbReference>
<dbReference type="GO" id="GO:0042709">
    <property type="term" value="C:succinate-CoA ligase complex"/>
    <property type="evidence" value="ECO:0007669"/>
    <property type="project" value="TreeGrafter"/>
</dbReference>
<dbReference type="GO" id="GO:0005524">
    <property type="term" value="F:ATP binding"/>
    <property type="evidence" value="ECO:0007669"/>
    <property type="project" value="UniProtKB-UniRule"/>
</dbReference>
<dbReference type="GO" id="GO:0000287">
    <property type="term" value="F:magnesium ion binding"/>
    <property type="evidence" value="ECO:0007669"/>
    <property type="project" value="UniProtKB-UniRule"/>
</dbReference>
<dbReference type="GO" id="GO:0004775">
    <property type="term" value="F:succinate-CoA ligase (ADP-forming) activity"/>
    <property type="evidence" value="ECO:0007669"/>
    <property type="project" value="UniProtKB-UniRule"/>
</dbReference>
<dbReference type="GO" id="GO:0004776">
    <property type="term" value="F:succinate-CoA ligase (GDP-forming) activity"/>
    <property type="evidence" value="ECO:0007669"/>
    <property type="project" value="RHEA"/>
</dbReference>
<dbReference type="GO" id="GO:0006104">
    <property type="term" value="P:succinyl-CoA metabolic process"/>
    <property type="evidence" value="ECO:0007669"/>
    <property type="project" value="TreeGrafter"/>
</dbReference>
<dbReference type="GO" id="GO:0006099">
    <property type="term" value="P:tricarboxylic acid cycle"/>
    <property type="evidence" value="ECO:0007669"/>
    <property type="project" value="UniProtKB-UniRule"/>
</dbReference>
<dbReference type="FunFam" id="3.30.1490.20:FF:000002">
    <property type="entry name" value="Succinate--CoA ligase [ADP-forming] subunit beta"/>
    <property type="match status" value="1"/>
</dbReference>
<dbReference type="FunFam" id="3.30.470.20:FF:000002">
    <property type="entry name" value="Succinate--CoA ligase [ADP-forming] subunit beta"/>
    <property type="match status" value="1"/>
</dbReference>
<dbReference type="FunFam" id="3.40.50.261:FF:000001">
    <property type="entry name" value="Succinate--CoA ligase [ADP-forming] subunit beta"/>
    <property type="match status" value="1"/>
</dbReference>
<dbReference type="Gene3D" id="3.30.1490.20">
    <property type="entry name" value="ATP-grasp fold, A domain"/>
    <property type="match status" value="1"/>
</dbReference>
<dbReference type="Gene3D" id="3.30.470.20">
    <property type="entry name" value="ATP-grasp fold, B domain"/>
    <property type="match status" value="1"/>
</dbReference>
<dbReference type="Gene3D" id="3.40.50.261">
    <property type="entry name" value="Succinyl-CoA synthetase domains"/>
    <property type="match status" value="1"/>
</dbReference>
<dbReference type="HAMAP" id="MF_00558">
    <property type="entry name" value="Succ_CoA_beta"/>
    <property type="match status" value="1"/>
</dbReference>
<dbReference type="InterPro" id="IPR011761">
    <property type="entry name" value="ATP-grasp"/>
</dbReference>
<dbReference type="InterPro" id="IPR013650">
    <property type="entry name" value="ATP-grasp_succ-CoA_synth-type"/>
</dbReference>
<dbReference type="InterPro" id="IPR013815">
    <property type="entry name" value="ATP_grasp_subdomain_1"/>
</dbReference>
<dbReference type="InterPro" id="IPR017866">
    <property type="entry name" value="Succ-CoA_synthase_bsu_CS"/>
</dbReference>
<dbReference type="InterPro" id="IPR005811">
    <property type="entry name" value="SUCC_ACL_C"/>
</dbReference>
<dbReference type="InterPro" id="IPR005809">
    <property type="entry name" value="Succ_CoA_ligase-like_bsu"/>
</dbReference>
<dbReference type="InterPro" id="IPR016102">
    <property type="entry name" value="Succinyl-CoA_synth-like"/>
</dbReference>
<dbReference type="NCBIfam" id="NF001913">
    <property type="entry name" value="PRK00696.1"/>
    <property type="match status" value="1"/>
</dbReference>
<dbReference type="NCBIfam" id="TIGR01016">
    <property type="entry name" value="sucCoAbeta"/>
    <property type="match status" value="1"/>
</dbReference>
<dbReference type="PANTHER" id="PTHR11815:SF10">
    <property type="entry name" value="SUCCINATE--COA LIGASE [GDP-FORMING] SUBUNIT BETA, MITOCHONDRIAL"/>
    <property type="match status" value="1"/>
</dbReference>
<dbReference type="PANTHER" id="PTHR11815">
    <property type="entry name" value="SUCCINYL-COA SYNTHETASE BETA CHAIN"/>
    <property type="match status" value="1"/>
</dbReference>
<dbReference type="Pfam" id="PF08442">
    <property type="entry name" value="ATP-grasp_2"/>
    <property type="match status" value="1"/>
</dbReference>
<dbReference type="Pfam" id="PF00549">
    <property type="entry name" value="Ligase_CoA"/>
    <property type="match status" value="1"/>
</dbReference>
<dbReference type="PIRSF" id="PIRSF001554">
    <property type="entry name" value="SucCS_beta"/>
    <property type="match status" value="1"/>
</dbReference>
<dbReference type="SUPFAM" id="SSF56059">
    <property type="entry name" value="Glutathione synthetase ATP-binding domain-like"/>
    <property type="match status" value="1"/>
</dbReference>
<dbReference type="SUPFAM" id="SSF52210">
    <property type="entry name" value="Succinyl-CoA synthetase domains"/>
    <property type="match status" value="1"/>
</dbReference>
<dbReference type="PROSITE" id="PS50975">
    <property type="entry name" value="ATP_GRASP"/>
    <property type="match status" value="1"/>
</dbReference>
<dbReference type="PROSITE" id="PS01217">
    <property type="entry name" value="SUCCINYL_COA_LIG_3"/>
    <property type="match status" value="1"/>
</dbReference>
<comment type="function">
    <text evidence="1">Succinyl-CoA synthetase functions in the citric acid cycle (TCA), coupling the hydrolysis of succinyl-CoA to the synthesis of either ATP or GTP and thus represents the only step of substrate-level phosphorylation in the TCA. The beta subunit provides nucleotide specificity of the enzyme and binds the substrate succinate, while the binding sites for coenzyme A and phosphate are found in the alpha subunit.</text>
</comment>
<comment type="catalytic activity">
    <reaction evidence="1">
        <text>succinate + ATP + CoA = succinyl-CoA + ADP + phosphate</text>
        <dbReference type="Rhea" id="RHEA:17661"/>
        <dbReference type="ChEBI" id="CHEBI:30031"/>
        <dbReference type="ChEBI" id="CHEBI:30616"/>
        <dbReference type="ChEBI" id="CHEBI:43474"/>
        <dbReference type="ChEBI" id="CHEBI:57287"/>
        <dbReference type="ChEBI" id="CHEBI:57292"/>
        <dbReference type="ChEBI" id="CHEBI:456216"/>
        <dbReference type="EC" id="6.2.1.5"/>
    </reaction>
    <physiologicalReaction direction="right-to-left" evidence="1">
        <dbReference type="Rhea" id="RHEA:17663"/>
    </physiologicalReaction>
</comment>
<comment type="catalytic activity">
    <reaction evidence="1">
        <text>GTP + succinate + CoA = succinyl-CoA + GDP + phosphate</text>
        <dbReference type="Rhea" id="RHEA:22120"/>
        <dbReference type="ChEBI" id="CHEBI:30031"/>
        <dbReference type="ChEBI" id="CHEBI:37565"/>
        <dbReference type="ChEBI" id="CHEBI:43474"/>
        <dbReference type="ChEBI" id="CHEBI:57287"/>
        <dbReference type="ChEBI" id="CHEBI:57292"/>
        <dbReference type="ChEBI" id="CHEBI:58189"/>
    </reaction>
    <physiologicalReaction direction="right-to-left" evidence="1">
        <dbReference type="Rhea" id="RHEA:22122"/>
    </physiologicalReaction>
</comment>
<comment type="cofactor">
    <cofactor evidence="1">
        <name>Mg(2+)</name>
        <dbReference type="ChEBI" id="CHEBI:18420"/>
    </cofactor>
    <text evidence="1">Binds 1 Mg(2+) ion per subunit.</text>
</comment>
<comment type="pathway">
    <text evidence="1">Carbohydrate metabolism; tricarboxylic acid cycle; succinate from succinyl-CoA (ligase route): step 1/1.</text>
</comment>
<comment type="subunit">
    <text evidence="1">Heterotetramer of two alpha and two beta subunits.</text>
</comment>
<comment type="similarity">
    <text evidence="1">Belongs to the succinate/malate CoA ligase beta subunit family.</text>
</comment>
<feature type="chain" id="PRO_1000129156" description="Succinate--CoA ligase [ADP-forming] subunit beta">
    <location>
        <begin position="1"/>
        <end position="388"/>
    </location>
</feature>
<feature type="domain" description="ATP-grasp" evidence="1">
    <location>
        <begin position="9"/>
        <end position="244"/>
    </location>
</feature>
<feature type="binding site" evidence="1">
    <location>
        <position position="46"/>
    </location>
    <ligand>
        <name>ATP</name>
        <dbReference type="ChEBI" id="CHEBI:30616"/>
    </ligand>
</feature>
<feature type="binding site" evidence="1">
    <location>
        <begin position="53"/>
        <end position="55"/>
    </location>
    <ligand>
        <name>ATP</name>
        <dbReference type="ChEBI" id="CHEBI:30616"/>
    </ligand>
</feature>
<feature type="binding site" evidence="1">
    <location>
        <position position="99"/>
    </location>
    <ligand>
        <name>ATP</name>
        <dbReference type="ChEBI" id="CHEBI:30616"/>
    </ligand>
</feature>
<feature type="binding site" evidence="1">
    <location>
        <position position="102"/>
    </location>
    <ligand>
        <name>ATP</name>
        <dbReference type="ChEBI" id="CHEBI:30616"/>
    </ligand>
</feature>
<feature type="binding site" evidence="1">
    <location>
        <position position="107"/>
    </location>
    <ligand>
        <name>ATP</name>
        <dbReference type="ChEBI" id="CHEBI:30616"/>
    </ligand>
</feature>
<feature type="binding site" evidence="1">
    <location>
        <position position="199"/>
    </location>
    <ligand>
        <name>Mg(2+)</name>
        <dbReference type="ChEBI" id="CHEBI:18420"/>
    </ligand>
</feature>
<feature type="binding site" evidence="1">
    <location>
        <position position="213"/>
    </location>
    <ligand>
        <name>Mg(2+)</name>
        <dbReference type="ChEBI" id="CHEBI:18420"/>
    </ligand>
</feature>
<feature type="binding site" evidence="1">
    <location>
        <position position="264"/>
    </location>
    <ligand>
        <name>substrate</name>
        <note>ligand shared with subunit alpha</note>
    </ligand>
</feature>
<feature type="binding site" evidence="1">
    <location>
        <begin position="321"/>
        <end position="323"/>
    </location>
    <ligand>
        <name>substrate</name>
        <note>ligand shared with subunit alpha</note>
    </ligand>
</feature>
<protein>
    <recommendedName>
        <fullName evidence="1">Succinate--CoA ligase [ADP-forming] subunit beta</fullName>
        <ecNumber evidence="1">6.2.1.5</ecNumber>
    </recommendedName>
    <alternativeName>
        <fullName evidence="1">Succinyl-CoA synthetase subunit beta</fullName>
        <shortName evidence="1">SCS-beta</shortName>
    </alternativeName>
</protein>
<evidence type="ECO:0000255" key="1">
    <source>
        <dbReference type="HAMAP-Rule" id="MF_00558"/>
    </source>
</evidence>
<name>SUCC_ALISL</name>